<keyword id="KW-0002">3D-structure</keyword>
<keyword id="KW-0963">Cytoplasm</keyword>
<keyword id="KW-1185">Reference proteome</keyword>
<keyword id="KW-0694">RNA-binding</keyword>
<dbReference type="EMBL" id="AE000657">
    <property type="protein sequence ID" value="AAC06597.1"/>
    <property type="molecule type" value="Genomic_DNA"/>
</dbReference>
<dbReference type="PIR" id="D70326">
    <property type="entry name" value="D70326"/>
</dbReference>
<dbReference type="RefSeq" id="NP_213200.1">
    <property type="nucleotide sequence ID" value="NC_000918.1"/>
</dbReference>
<dbReference type="RefSeq" id="WP_010880138.1">
    <property type="nucleotide sequence ID" value="NC_000918.1"/>
</dbReference>
<dbReference type="PDB" id="1K8H">
    <property type="method" value="NMR"/>
    <property type="chains" value="A=2-134"/>
</dbReference>
<dbReference type="PDB" id="1P6V">
    <property type="method" value="X-ray"/>
    <property type="resolution" value="3.20 A"/>
    <property type="chains" value="A/C=2-157"/>
</dbReference>
<dbReference type="PDB" id="1ZC8">
    <property type="method" value="EM"/>
    <property type="resolution" value="13.00 A"/>
    <property type="chains" value="K=2-131"/>
</dbReference>
<dbReference type="PDB" id="2OB7">
    <property type="method" value="EM"/>
    <property type="resolution" value="13.60 A"/>
    <property type="chains" value="B/C=2-157"/>
</dbReference>
<dbReference type="PDBsum" id="1K8H"/>
<dbReference type="PDBsum" id="1P6V"/>
<dbReference type="PDBsum" id="1ZC8"/>
<dbReference type="PDBsum" id="2OB7"/>
<dbReference type="EMDB" id="EMD-1310"/>
<dbReference type="SMR" id="O66640"/>
<dbReference type="FunCoup" id="O66640">
    <property type="interactions" value="394"/>
</dbReference>
<dbReference type="STRING" id="224324.aq_287"/>
<dbReference type="EnsemblBacteria" id="AAC06597">
    <property type="protein sequence ID" value="AAC06597"/>
    <property type="gene ID" value="aq_287"/>
</dbReference>
<dbReference type="KEGG" id="aae:aq_287"/>
<dbReference type="PATRIC" id="fig|224324.8.peg.238"/>
<dbReference type="eggNOG" id="COG0691">
    <property type="taxonomic scope" value="Bacteria"/>
</dbReference>
<dbReference type="HOGENOM" id="CLU_108953_0_1_0"/>
<dbReference type="InParanoid" id="O66640"/>
<dbReference type="OrthoDB" id="9805462at2"/>
<dbReference type="EvolutionaryTrace" id="O66640"/>
<dbReference type="Proteomes" id="UP000000798">
    <property type="component" value="Chromosome"/>
</dbReference>
<dbReference type="GO" id="GO:0005829">
    <property type="term" value="C:cytosol"/>
    <property type="evidence" value="ECO:0000318"/>
    <property type="project" value="GO_Central"/>
</dbReference>
<dbReference type="GO" id="GO:0003723">
    <property type="term" value="F:RNA binding"/>
    <property type="evidence" value="ECO:0000318"/>
    <property type="project" value="GO_Central"/>
</dbReference>
<dbReference type="GO" id="GO:0070929">
    <property type="term" value="P:trans-translation"/>
    <property type="evidence" value="ECO:0007669"/>
    <property type="project" value="UniProtKB-UniRule"/>
</dbReference>
<dbReference type="CDD" id="cd09294">
    <property type="entry name" value="SmpB"/>
    <property type="match status" value="1"/>
</dbReference>
<dbReference type="Gene3D" id="2.40.280.10">
    <property type="match status" value="1"/>
</dbReference>
<dbReference type="HAMAP" id="MF_00023">
    <property type="entry name" value="SmpB"/>
    <property type="match status" value="1"/>
</dbReference>
<dbReference type="InterPro" id="IPR023620">
    <property type="entry name" value="SmpB"/>
</dbReference>
<dbReference type="InterPro" id="IPR000037">
    <property type="entry name" value="SsrA-bd_prot"/>
</dbReference>
<dbReference type="InterPro" id="IPR020081">
    <property type="entry name" value="SsrA-bd_prot_CS"/>
</dbReference>
<dbReference type="NCBIfam" id="NF003843">
    <property type="entry name" value="PRK05422.1"/>
    <property type="match status" value="1"/>
</dbReference>
<dbReference type="NCBIfam" id="TIGR00086">
    <property type="entry name" value="smpB"/>
    <property type="match status" value="1"/>
</dbReference>
<dbReference type="PANTHER" id="PTHR30308:SF2">
    <property type="entry name" value="SSRA-BINDING PROTEIN"/>
    <property type="match status" value="1"/>
</dbReference>
<dbReference type="PANTHER" id="PTHR30308">
    <property type="entry name" value="TMRNA-BINDING COMPONENT OF TRANS-TRANSLATION TAGGING COMPLEX"/>
    <property type="match status" value="1"/>
</dbReference>
<dbReference type="Pfam" id="PF01668">
    <property type="entry name" value="SmpB"/>
    <property type="match status" value="1"/>
</dbReference>
<dbReference type="SUPFAM" id="SSF74982">
    <property type="entry name" value="Small protein B (SmpB)"/>
    <property type="match status" value="1"/>
</dbReference>
<dbReference type="PROSITE" id="PS01317">
    <property type="entry name" value="SSRP"/>
    <property type="match status" value="1"/>
</dbReference>
<reference key="1">
    <citation type="journal article" date="1998" name="Nature">
        <title>The complete genome of the hyperthermophilic bacterium Aquifex aeolicus.</title>
        <authorList>
            <person name="Deckert G."/>
            <person name="Warren P.V."/>
            <person name="Gaasterland T."/>
            <person name="Young W.G."/>
            <person name="Lenox A.L."/>
            <person name="Graham D.E."/>
            <person name="Overbeek R."/>
            <person name="Snead M.A."/>
            <person name="Keller M."/>
            <person name="Aujay M."/>
            <person name="Huber R."/>
            <person name="Feldman R.A."/>
            <person name="Short J.M."/>
            <person name="Olsen G.J."/>
            <person name="Swanson R.V."/>
        </authorList>
    </citation>
    <scope>NUCLEOTIDE SEQUENCE [LARGE SCALE GENOMIC DNA]</scope>
    <source>
        <strain>VF5</strain>
    </source>
</reference>
<reference key="2">
    <citation type="journal article" date="2002" name="EMBO J.">
        <title>Structure of small protein B: the protein component of the tmRNA-SmpB system for ribosome rescue.</title>
        <authorList>
            <person name="Dong G."/>
            <person name="Nowakowski J."/>
            <person name="Hoffman D.W."/>
        </authorList>
    </citation>
    <scope>STRUCTURE BY NMR OF 2-134</scope>
</reference>
<reference key="3">
    <citation type="journal article" date="2003" name="Science">
        <title>Visualizing tmRNA entry into a stalled ribosome.</title>
        <authorList>
            <person name="Valle M."/>
            <person name="Gillet R."/>
            <person name="Kaur S."/>
            <person name="Henne A."/>
            <person name="Ramakrishnan V."/>
            <person name="Frank J."/>
        </authorList>
    </citation>
    <scope>STRUCTURE BY ELECTRON MICROSCOPY (13.00 ANGSTROMS) OF 2-131</scope>
</reference>
<gene>
    <name evidence="1" type="primary">smpB</name>
    <name type="synonym">smb</name>
    <name type="ordered locus">aq_287</name>
</gene>
<name>SSRP_AQUAE</name>
<organism>
    <name type="scientific">Aquifex aeolicus (strain VF5)</name>
    <dbReference type="NCBI Taxonomy" id="224324"/>
    <lineage>
        <taxon>Bacteria</taxon>
        <taxon>Pseudomonadati</taxon>
        <taxon>Aquificota</taxon>
        <taxon>Aquificia</taxon>
        <taxon>Aquificales</taxon>
        <taxon>Aquificaceae</taxon>
        <taxon>Aquifex</taxon>
    </lineage>
</organism>
<accession>O66640</accession>
<evidence type="ECO:0000255" key="1">
    <source>
        <dbReference type="HAMAP-Rule" id="MF_00023"/>
    </source>
</evidence>
<evidence type="ECO:0000305" key="2">
    <source>
    </source>
</evidence>
<evidence type="ECO:0007829" key="3">
    <source>
        <dbReference type="PDB" id="1K8H"/>
    </source>
</evidence>
<evidence type="ECO:0007829" key="4">
    <source>
        <dbReference type="PDB" id="1P6V"/>
    </source>
</evidence>
<proteinExistence type="evidence at protein level"/>
<protein>
    <recommendedName>
        <fullName evidence="1">SsrA-binding protein</fullName>
    </recommendedName>
    <alternativeName>
        <fullName evidence="1">Small protein B</fullName>
    </alternativeName>
</protein>
<sequence>MGKSDKIIPIAENKEAKAKYDILETYEAGIVLKGSEVKSLREKGTVSFKDSFVRIENGEAWLYNLYIAPYKHATIENHDPLRKRKLLLHKREIMRLYGKVQEKGYTIIPLKLYWKNNKVKVLIALAKGKKLYDRRRELKEKAMKRELEREFKGKIHL</sequence>
<comment type="function">
    <text evidence="1">Required for rescue of stalled ribosomes mediated by trans-translation. Binds to transfer-messenger RNA (tmRNA), required for stable association of tmRNA with ribosomes. tmRNA and SmpB together mimic tRNA shape, replacing the anticodon stem-loop with SmpB. tmRNA is encoded by the ssrA gene; the 2 termini fold to resemble tRNA(Ala) and it encodes a 'tag peptide', a short internal open reading frame. During trans-translation Ala-aminoacylated tmRNA acts like a tRNA, entering the A-site of stalled ribosomes, displacing the stalled mRNA. The ribosome then switches to translate the ORF on the tmRNA; the nascent peptide is terminated with the 'tag peptide' encoded by the tmRNA and targeted for degradation. The ribosome is freed to recommence translation, which seems to be the essential function of trans-translation.</text>
</comment>
<comment type="subcellular location">
    <subcellularLocation>
        <location evidence="1">Cytoplasm</location>
    </subcellularLocation>
    <text evidence="1">The tmRNA-SmpB complex associates with stalled 70S ribosomes.</text>
</comment>
<comment type="miscellaneous">
    <text evidence="2">Although the Valle et al., electron microscopy paper indicates this protein came from T.thermophilus its sequence maps to A.aeolicus.</text>
</comment>
<comment type="similarity">
    <text evidence="1">Belongs to the SmpB family.</text>
</comment>
<feature type="chain" id="PRO_0000102894" description="SsrA-binding protein">
    <location>
        <begin position="1"/>
        <end position="157"/>
    </location>
</feature>
<feature type="strand" evidence="4">
    <location>
        <begin position="7"/>
        <end position="12"/>
    </location>
</feature>
<feature type="turn" evidence="4">
    <location>
        <begin position="15"/>
        <end position="19"/>
    </location>
</feature>
<feature type="strand" evidence="4">
    <location>
        <begin position="22"/>
        <end position="27"/>
    </location>
</feature>
<feature type="helix" evidence="4">
    <location>
        <begin position="34"/>
        <end position="41"/>
    </location>
</feature>
<feature type="strand" evidence="3">
    <location>
        <begin position="48"/>
        <end position="56"/>
    </location>
</feature>
<feature type="strand" evidence="3">
    <location>
        <begin position="59"/>
        <end position="65"/>
    </location>
</feature>
<feature type="strand" evidence="4">
    <location>
        <begin position="84"/>
        <end position="86"/>
    </location>
</feature>
<feature type="helix" evidence="4">
    <location>
        <begin position="90"/>
        <end position="103"/>
    </location>
</feature>
<feature type="strand" evidence="4">
    <location>
        <begin position="106"/>
        <end position="117"/>
    </location>
</feature>
<feature type="strand" evidence="4">
    <location>
        <begin position="119"/>
        <end position="126"/>
    </location>
</feature>